<feature type="chain" id="PRO_0000202428" description="Putative uncharacterized membrane protein YAR047C">
    <location>
        <begin position="1"/>
        <end position="106"/>
    </location>
</feature>
<feature type="topological domain" description="Cytoplasmic" evidence="1">
    <location>
        <begin position="1"/>
        <end position="6"/>
    </location>
</feature>
<feature type="transmembrane region" description="Helical" evidence="1">
    <location>
        <begin position="7"/>
        <end position="27"/>
    </location>
</feature>
<feature type="topological domain" description="Extracellular" evidence="1">
    <location>
        <begin position="28"/>
        <end position="32"/>
    </location>
</feature>
<feature type="transmembrane region" description="Helical" evidence="1">
    <location>
        <begin position="33"/>
        <end position="53"/>
    </location>
</feature>
<feature type="topological domain" description="Cytoplasmic" evidence="1">
    <location>
        <begin position="54"/>
        <end position="73"/>
    </location>
</feature>
<feature type="transmembrane region" description="Helical" evidence="1">
    <location>
        <begin position="74"/>
        <end position="94"/>
    </location>
</feature>
<feature type="topological domain" description="Extracellular" evidence="1">
    <location>
        <begin position="95"/>
        <end position="106"/>
    </location>
</feature>
<accession>P39557</accession>
<proteinExistence type="uncertain"/>
<sequence>MYQTSPLSLFYFQVLVPKFLECFLCFPYHKISLVALLSFFYCQLQTNMIILLSQIKRFLYRQIMIALKIKAKKFWFIFKYFNVSCDARLFNELFYIFQTYVSVDSK</sequence>
<comment type="subcellular location">
    <subcellularLocation>
        <location>Membrane</location>
        <topology>Multi-pass membrane protein</topology>
    </subcellularLocation>
</comment>
<comment type="caution">
    <text evidence="2">Product of a dubious gene prediction unlikely to encode a functional protein. Because of that it is not part of the S.cerevisiae S288c complete/reference proteome set.</text>
</comment>
<reference key="1">
    <citation type="submission" date="1994-02" db="EMBL/GenBank/DDBJ databases">
        <title>Sequencing of chromosome I of Saccharomyces cerevisiae: analysis of the 52 Kbp CDC15-FLO1-PHO11-YAR074 region.</title>
        <authorList>
            <person name="Bussey H."/>
            <person name="Keng T."/>
            <person name="Storms R.K."/>
            <person name="Vo D."/>
            <person name="Zhong W."/>
            <person name="Fortin N."/>
            <person name="Barton A.B."/>
            <person name="Kaback D.B."/>
            <person name="Clark M.W."/>
        </authorList>
    </citation>
    <scope>NUCLEOTIDE SEQUENCE [GENOMIC DNA]</scope>
    <source>
        <strain>ATCC 204511 / S288c / AB972</strain>
    </source>
</reference>
<reference key="2">
    <citation type="journal article" date="1995" name="Proc. Natl. Acad. Sci. U.S.A.">
        <title>The nucleotide sequence of chromosome I from Saccharomyces cerevisiae.</title>
        <authorList>
            <person name="Bussey H."/>
            <person name="Kaback D.B."/>
            <person name="Zhong W.-W."/>
            <person name="Vo D.H."/>
            <person name="Clark M.W."/>
            <person name="Fortin N."/>
            <person name="Hall J."/>
            <person name="Ouellette B.F.F."/>
            <person name="Keng T."/>
            <person name="Barton A.B."/>
            <person name="Su Y."/>
            <person name="Davies C.J."/>
            <person name="Storms R.K."/>
        </authorList>
    </citation>
    <scope>NUCLEOTIDE SEQUENCE [LARGE SCALE GENOMIC DNA]</scope>
    <source>
        <strain>ATCC 204508 / S288c</strain>
    </source>
</reference>
<reference key="3">
    <citation type="journal article" date="2014" name="G3 (Bethesda)">
        <title>The reference genome sequence of Saccharomyces cerevisiae: Then and now.</title>
        <authorList>
            <person name="Engel S.R."/>
            <person name="Dietrich F.S."/>
            <person name="Fisk D.G."/>
            <person name="Binkley G."/>
            <person name="Balakrishnan R."/>
            <person name="Costanzo M.C."/>
            <person name="Dwight S.S."/>
            <person name="Hitz B.C."/>
            <person name="Karra K."/>
            <person name="Nash R.S."/>
            <person name="Weng S."/>
            <person name="Wong E.D."/>
            <person name="Lloyd P."/>
            <person name="Skrzypek M.S."/>
            <person name="Miyasato S.R."/>
            <person name="Simison M."/>
            <person name="Cherry J.M."/>
        </authorList>
    </citation>
    <scope>GENOME REANNOTATION</scope>
    <source>
        <strain>ATCC 204508 / S288c</strain>
    </source>
</reference>
<reference key="4">
    <citation type="journal article" date="2006" name="Proc. Natl. Acad. Sci. U.S.A.">
        <title>A global topology map of the Saccharomyces cerevisiae membrane proteome.</title>
        <authorList>
            <person name="Kim H."/>
            <person name="Melen K."/>
            <person name="Oesterberg M."/>
            <person name="von Heijne G."/>
        </authorList>
    </citation>
    <scope>TOPOLOGY [LARGE SCALE ANALYSIS]</scope>
    <source>
        <strain>ATCC 208353 / W303-1A</strain>
    </source>
</reference>
<keyword id="KW-0472">Membrane</keyword>
<keyword id="KW-0812">Transmembrane</keyword>
<keyword id="KW-1133">Transmembrane helix</keyword>
<evidence type="ECO:0000255" key="1"/>
<evidence type="ECO:0000305" key="2">
    <source>
    </source>
</evidence>
<organism>
    <name type="scientific">Saccharomyces cerevisiae (strain ATCC 204508 / S288c)</name>
    <name type="common">Baker's yeast</name>
    <dbReference type="NCBI Taxonomy" id="559292"/>
    <lineage>
        <taxon>Eukaryota</taxon>
        <taxon>Fungi</taxon>
        <taxon>Dikarya</taxon>
        <taxon>Ascomycota</taxon>
        <taxon>Saccharomycotina</taxon>
        <taxon>Saccharomycetes</taxon>
        <taxon>Saccharomycetales</taxon>
        <taxon>Saccharomycetaceae</taxon>
        <taxon>Saccharomyces</taxon>
    </lineage>
</organism>
<name>YAL7_YEAST</name>
<gene>
    <name type="ordered locus">YAR047C</name>
</gene>
<dbReference type="EMBL" id="L28920">
    <property type="protein sequence ID" value="AAC09498.1"/>
    <property type="molecule type" value="Genomic_DNA"/>
</dbReference>
<dbReference type="PIR" id="S53464">
    <property type="entry name" value="S53464"/>
</dbReference>
<dbReference type="SMR" id="P39557"/>
<dbReference type="DIP" id="DIP-5700N"/>
<dbReference type="STRING" id="4932.YAR047C"/>
<dbReference type="PaxDb" id="4932-YAR047C"/>
<dbReference type="EnsemblFungi" id="YAR047C_mRNA">
    <property type="protein sequence ID" value="YAR047C"/>
    <property type="gene ID" value="YAR047C"/>
</dbReference>
<dbReference type="AGR" id="SGD:S000000083"/>
<dbReference type="SGD" id="S000000083">
    <property type="gene designation" value="YAR047C"/>
</dbReference>
<dbReference type="HOGENOM" id="CLU_2225291_0_0_1"/>
<dbReference type="GO" id="GO:0016020">
    <property type="term" value="C:membrane"/>
    <property type="evidence" value="ECO:0007669"/>
    <property type="project" value="UniProtKB-SubCell"/>
</dbReference>
<protein>
    <recommendedName>
        <fullName>Putative uncharacterized membrane protein YAR047C</fullName>
    </recommendedName>
</protein>